<feature type="chain" id="PRO_0000083632" description="3-isopropylmalate dehydrogenase">
    <location>
        <begin position="1"/>
        <end position="354"/>
    </location>
</feature>
<feature type="binding site" evidence="1">
    <location>
        <begin position="76"/>
        <end position="87"/>
    </location>
    <ligand>
        <name>NAD(+)</name>
        <dbReference type="ChEBI" id="CHEBI:57540"/>
    </ligand>
</feature>
<feature type="binding site" evidence="1">
    <location>
        <position position="94"/>
    </location>
    <ligand>
        <name>substrate</name>
    </ligand>
</feature>
<feature type="binding site" evidence="1">
    <location>
        <position position="104"/>
    </location>
    <ligand>
        <name>substrate</name>
    </ligand>
</feature>
<feature type="binding site" evidence="1">
    <location>
        <position position="130"/>
    </location>
    <ligand>
        <name>substrate</name>
    </ligand>
</feature>
<feature type="binding site" evidence="1">
    <location>
        <position position="215"/>
    </location>
    <ligand>
        <name>Mg(2+)</name>
        <dbReference type="ChEBI" id="CHEBI:18420"/>
    </ligand>
</feature>
<feature type="binding site" evidence="1">
    <location>
        <position position="215"/>
    </location>
    <ligand>
        <name>substrate</name>
    </ligand>
</feature>
<feature type="binding site" evidence="1">
    <location>
        <position position="239"/>
    </location>
    <ligand>
        <name>Mg(2+)</name>
        <dbReference type="ChEBI" id="CHEBI:18420"/>
    </ligand>
</feature>
<feature type="binding site" evidence="1">
    <location>
        <position position="243"/>
    </location>
    <ligand>
        <name>Mg(2+)</name>
        <dbReference type="ChEBI" id="CHEBI:18420"/>
    </ligand>
</feature>
<feature type="binding site" evidence="1">
    <location>
        <begin position="273"/>
        <end position="285"/>
    </location>
    <ligand>
        <name>NAD(+)</name>
        <dbReference type="ChEBI" id="CHEBI:57540"/>
    </ligand>
</feature>
<feature type="site" description="Important for catalysis" evidence="1">
    <location>
        <position position="137"/>
    </location>
</feature>
<feature type="site" description="Important for catalysis" evidence="1">
    <location>
        <position position="183"/>
    </location>
</feature>
<keyword id="KW-0028">Amino-acid biosynthesis</keyword>
<keyword id="KW-0100">Branched-chain amino acid biosynthesis</keyword>
<keyword id="KW-0963">Cytoplasm</keyword>
<keyword id="KW-0432">Leucine biosynthesis</keyword>
<keyword id="KW-0460">Magnesium</keyword>
<keyword id="KW-0464">Manganese</keyword>
<keyword id="KW-0479">Metal-binding</keyword>
<keyword id="KW-0520">NAD</keyword>
<keyword id="KW-0560">Oxidoreductase</keyword>
<keyword id="KW-1185">Reference proteome</keyword>
<evidence type="ECO:0000255" key="1">
    <source>
        <dbReference type="HAMAP-Rule" id="MF_01033"/>
    </source>
</evidence>
<protein>
    <recommendedName>
        <fullName evidence="1">3-isopropylmalate dehydrogenase</fullName>
        <ecNumber evidence="1">1.1.1.85</ecNumber>
    </recommendedName>
    <alternativeName>
        <fullName evidence="1">3-IPM-DH</fullName>
    </alternativeName>
    <alternativeName>
        <fullName evidence="1">Beta-IPM dehydrogenase</fullName>
        <shortName evidence="1">IMDH</shortName>
    </alternativeName>
</protein>
<name>LEU3_BACAN</name>
<comment type="function">
    <text evidence="1">Catalyzes the oxidation of 3-carboxy-2-hydroxy-4-methylpentanoate (3-isopropylmalate) to 3-carboxy-4-methyl-2-oxopentanoate. The product decarboxylates to 4-methyl-2 oxopentanoate.</text>
</comment>
<comment type="catalytic activity">
    <reaction evidence="1">
        <text>(2R,3S)-3-isopropylmalate + NAD(+) = 4-methyl-2-oxopentanoate + CO2 + NADH</text>
        <dbReference type="Rhea" id="RHEA:32271"/>
        <dbReference type="ChEBI" id="CHEBI:16526"/>
        <dbReference type="ChEBI" id="CHEBI:17865"/>
        <dbReference type="ChEBI" id="CHEBI:35121"/>
        <dbReference type="ChEBI" id="CHEBI:57540"/>
        <dbReference type="ChEBI" id="CHEBI:57945"/>
        <dbReference type="EC" id="1.1.1.85"/>
    </reaction>
</comment>
<comment type="cofactor">
    <cofactor evidence="1">
        <name>Mg(2+)</name>
        <dbReference type="ChEBI" id="CHEBI:18420"/>
    </cofactor>
    <cofactor evidence="1">
        <name>Mn(2+)</name>
        <dbReference type="ChEBI" id="CHEBI:29035"/>
    </cofactor>
    <text evidence="1">Binds 1 Mg(2+) or Mn(2+) ion per subunit.</text>
</comment>
<comment type="pathway">
    <text evidence="1">Amino-acid biosynthesis; L-leucine biosynthesis; L-leucine from 3-methyl-2-oxobutanoate: step 3/4.</text>
</comment>
<comment type="subunit">
    <text evidence="1">Homodimer.</text>
</comment>
<comment type="subcellular location">
    <subcellularLocation>
        <location evidence="1">Cytoplasm</location>
    </subcellularLocation>
</comment>
<comment type="similarity">
    <text evidence="1">Belongs to the isocitrate and isopropylmalate dehydrogenases family. LeuB type 1 subfamily.</text>
</comment>
<organism>
    <name type="scientific">Bacillus anthracis</name>
    <dbReference type="NCBI Taxonomy" id="1392"/>
    <lineage>
        <taxon>Bacteria</taxon>
        <taxon>Bacillati</taxon>
        <taxon>Bacillota</taxon>
        <taxon>Bacilli</taxon>
        <taxon>Bacillales</taxon>
        <taxon>Bacillaceae</taxon>
        <taxon>Bacillus</taxon>
        <taxon>Bacillus cereus group</taxon>
    </lineage>
</organism>
<proteinExistence type="inferred from homology"/>
<accession>Q81T67</accession>
<accession>Q6I1F0</accession>
<accession>Q6KV96</accession>
<sequence length="354" mass="38329">MEKRIVCLAGDGVGPEVMESAKEVLHMVERLYGHHFHLQDEHFGGVAIDLTGQPLPQRTLAACLASDAVLLGAVGGPRWDGAKERPEKGLLALRKGLGVFANVRPVTVESATAHLSPLKKADEIDFVVVRELTGGIYFSYPKERTDEVATDTLTYHRHEIERIVSCAFQLASKRKKKVTSIDKANVLESSKLWRIVTEEVALRYPDVELEHILVDAAAMELIRNPGRFDVIVTENLFGDILSDEASVLAGSLGMLPSASHAEKGPSLYEPIHGSAPDIAGKNKANPIAMMRSVAMMLGQSFGLTREGCAIEEAISAVLKSGKCTADIGGTETTTSFTKAVMQEMEEQALVGRGR</sequence>
<dbReference type="EC" id="1.1.1.85" evidence="1"/>
<dbReference type="EMBL" id="AE016879">
    <property type="protein sequence ID" value="AAP25364.1"/>
    <property type="molecule type" value="Genomic_DNA"/>
</dbReference>
<dbReference type="EMBL" id="AE017334">
    <property type="protein sequence ID" value="AAT30517.2"/>
    <property type="molecule type" value="Genomic_DNA"/>
</dbReference>
<dbReference type="EMBL" id="AE017225">
    <property type="protein sequence ID" value="AAT53632.1"/>
    <property type="molecule type" value="Genomic_DNA"/>
</dbReference>
<dbReference type="RefSeq" id="NP_843878.1">
    <property type="nucleotide sequence ID" value="NC_003997.3"/>
</dbReference>
<dbReference type="RefSeq" id="WP_000415354.1">
    <property type="nucleotide sequence ID" value="NZ_WXXJ01000017.1"/>
</dbReference>
<dbReference type="RefSeq" id="YP_027581.1">
    <property type="nucleotide sequence ID" value="NC_005945.1"/>
</dbReference>
<dbReference type="SMR" id="Q81T67"/>
<dbReference type="STRING" id="261594.GBAA_1421"/>
<dbReference type="DNASU" id="1084163"/>
<dbReference type="GeneID" id="45021400"/>
<dbReference type="KEGG" id="ban:BA_1421"/>
<dbReference type="KEGG" id="bar:GBAA_1421"/>
<dbReference type="KEGG" id="bat:BAS1312"/>
<dbReference type="PATRIC" id="fig|198094.11.peg.1394"/>
<dbReference type="eggNOG" id="COG0473">
    <property type="taxonomic scope" value="Bacteria"/>
</dbReference>
<dbReference type="HOGENOM" id="CLU_031953_0_3_9"/>
<dbReference type="OMA" id="EYDLGAR"/>
<dbReference type="OrthoDB" id="9806254at2"/>
<dbReference type="UniPathway" id="UPA00048">
    <property type="reaction ID" value="UER00072"/>
</dbReference>
<dbReference type="Proteomes" id="UP000000427">
    <property type="component" value="Chromosome"/>
</dbReference>
<dbReference type="Proteomes" id="UP000000594">
    <property type="component" value="Chromosome"/>
</dbReference>
<dbReference type="GO" id="GO:0005829">
    <property type="term" value="C:cytosol"/>
    <property type="evidence" value="ECO:0007669"/>
    <property type="project" value="TreeGrafter"/>
</dbReference>
<dbReference type="GO" id="GO:0003862">
    <property type="term" value="F:3-isopropylmalate dehydrogenase activity"/>
    <property type="evidence" value="ECO:0007669"/>
    <property type="project" value="UniProtKB-UniRule"/>
</dbReference>
<dbReference type="GO" id="GO:0000287">
    <property type="term" value="F:magnesium ion binding"/>
    <property type="evidence" value="ECO:0007669"/>
    <property type="project" value="InterPro"/>
</dbReference>
<dbReference type="GO" id="GO:0051287">
    <property type="term" value="F:NAD binding"/>
    <property type="evidence" value="ECO:0007669"/>
    <property type="project" value="InterPro"/>
</dbReference>
<dbReference type="GO" id="GO:0009098">
    <property type="term" value="P:L-leucine biosynthetic process"/>
    <property type="evidence" value="ECO:0007669"/>
    <property type="project" value="UniProtKB-UniRule"/>
</dbReference>
<dbReference type="FunFam" id="3.40.718.10:FF:000006">
    <property type="entry name" value="3-isopropylmalate dehydrogenase"/>
    <property type="match status" value="1"/>
</dbReference>
<dbReference type="Gene3D" id="3.40.718.10">
    <property type="entry name" value="Isopropylmalate Dehydrogenase"/>
    <property type="match status" value="1"/>
</dbReference>
<dbReference type="HAMAP" id="MF_01033">
    <property type="entry name" value="LeuB_type1"/>
    <property type="match status" value="1"/>
</dbReference>
<dbReference type="InterPro" id="IPR019818">
    <property type="entry name" value="IsoCit/isopropylmalate_DH_CS"/>
</dbReference>
<dbReference type="InterPro" id="IPR024084">
    <property type="entry name" value="IsoPropMal-DH-like_dom"/>
</dbReference>
<dbReference type="InterPro" id="IPR004429">
    <property type="entry name" value="Isopropylmalate_DH"/>
</dbReference>
<dbReference type="NCBIfam" id="TIGR00169">
    <property type="entry name" value="leuB"/>
    <property type="match status" value="1"/>
</dbReference>
<dbReference type="PANTHER" id="PTHR42979">
    <property type="entry name" value="3-ISOPROPYLMALATE DEHYDROGENASE"/>
    <property type="match status" value="1"/>
</dbReference>
<dbReference type="PANTHER" id="PTHR42979:SF1">
    <property type="entry name" value="3-ISOPROPYLMALATE DEHYDROGENASE"/>
    <property type="match status" value="1"/>
</dbReference>
<dbReference type="Pfam" id="PF00180">
    <property type="entry name" value="Iso_dh"/>
    <property type="match status" value="1"/>
</dbReference>
<dbReference type="SMART" id="SM01329">
    <property type="entry name" value="Iso_dh"/>
    <property type="match status" value="1"/>
</dbReference>
<dbReference type="SUPFAM" id="SSF53659">
    <property type="entry name" value="Isocitrate/Isopropylmalate dehydrogenase-like"/>
    <property type="match status" value="1"/>
</dbReference>
<dbReference type="PROSITE" id="PS00470">
    <property type="entry name" value="IDH_IMDH"/>
    <property type="match status" value="1"/>
</dbReference>
<gene>
    <name evidence="1" type="primary">leuB</name>
    <name type="ordered locus">BA_1421</name>
    <name type="ordered locus">GBAA_1421</name>
    <name type="ordered locus">BAS1312</name>
</gene>
<reference key="1">
    <citation type="journal article" date="2003" name="Nature">
        <title>The genome sequence of Bacillus anthracis Ames and comparison to closely related bacteria.</title>
        <authorList>
            <person name="Read T.D."/>
            <person name="Peterson S.N."/>
            <person name="Tourasse N.J."/>
            <person name="Baillie L.W."/>
            <person name="Paulsen I.T."/>
            <person name="Nelson K.E."/>
            <person name="Tettelin H."/>
            <person name="Fouts D.E."/>
            <person name="Eisen J.A."/>
            <person name="Gill S.R."/>
            <person name="Holtzapple E.K."/>
            <person name="Okstad O.A."/>
            <person name="Helgason E."/>
            <person name="Rilstone J."/>
            <person name="Wu M."/>
            <person name="Kolonay J.F."/>
            <person name="Beanan M.J."/>
            <person name="Dodson R.J."/>
            <person name="Brinkac L.M."/>
            <person name="Gwinn M.L."/>
            <person name="DeBoy R.T."/>
            <person name="Madpu R."/>
            <person name="Daugherty S.C."/>
            <person name="Durkin A.S."/>
            <person name="Haft D.H."/>
            <person name="Nelson W.C."/>
            <person name="Peterson J.D."/>
            <person name="Pop M."/>
            <person name="Khouri H.M."/>
            <person name="Radune D."/>
            <person name="Benton J.L."/>
            <person name="Mahamoud Y."/>
            <person name="Jiang L."/>
            <person name="Hance I.R."/>
            <person name="Weidman J.F."/>
            <person name="Berry K.J."/>
            <person name="Plaut R.D."/>
            <person name="Wolf A.M."/>
            <person name="Watkins K.L."/>
            <person name="Nierman W.C."/>
            <person name="Hazen A."/>
            <person name="Cline R.T."/>
            <person name="Redmond C."/>
            <person name="Thwaite J.E."/>
            <person name="White O."/>
            <person name="Salzberg S.L."/>
            <person name="Thomason B."/>
            <person name="Friedlander A.M."/>
            <person name="Koehler T.M."/>
            <person name="Hanna P.C."/>
            <person name="Kolstoe A.-B."/>
            <person name="Fraser C.M."/>
        </authorList>
    </citation>
    <scope>NUCLEOTIDE SEQUENCE [LARGE SCALE GENOMIC DNA]</scope>
    <source>
        <strain>Ames / isolate Porton</strain>
    </source>
</reference>
<reference key="2">
    <citation type="journal article" date="2009" name="J. Bacteriol.">
        <title>The complete genome sequence of Bacillus anthracis Ames 'Ancestor'.</title>
        <authorList>
            <person name="Ravel J."/>
            <person name="Jiang L."/>
            <person name="Stanley S.T."/>
            <person name="Wilson M.R."/>
            <person name="Decker R.S."/>
            <person name="Read T.D."/>
            <person name="Worsham P."/>
            <person name="Keim P.S."/>
            <person name="Salzberg S.L."/>
            <person name="Fraser-Liggett C.M."/>
            <person name="Rasko D.A."/>
        </authorList>
    </citation>
    <scope>NUCLEOTIDE SEQUENCE [LARGE SCALE GENOMIC DNA]</scope>
    <source>
        <strain>Ames ancestor</strain>
    </source>
</reference>
<reference key="3">
    <citation type="submission" date="2004-01" db="EMBL/GenBank/DDBJ databases">
        <title>Complete genome sequence of Bacillus anthracis Sterne.</title>
        <authorList>
            <person name="Brettin T.S."/>
            <person name="Bruce D."/>
            <person name="Challacombe J.F."/>
            <person name="Gilna P."/>
            <person name="Han C."/>
            <person name="Hill K."/>
            <person name="Hitchcock P."/>
            <person name="Jackson P."/>
            <person name="Keim P."/>
            <person name="Longmire J."/>
            <person name="Lucas S."/>
            <person name="Okinaka R."/>
            <person name="Richardson P."/>
            <person name="Rubin E."/>
            <person name="Tice H."/>
        </authorList>
    </citation>
    <scope>NUCLEOTIDE SEQUENCE [LARGE SCALE GENOMIC DNA]</scope>
    <source>
        <strain>Sterne</strain>
    </source>
</reference>